<dbReference type="EMBL" id="AE000782">
    <property type="protein sequence ID" value="AAB90467.1"/>
    <property type="molecule type" value="Genomic_DNA"/>
</dbReference>
<dbReference type="PIR" id="E69345">
    <property type="entry name" value="E69345"/>
</dbReference>
<dbReference type="RefSeq" id="WP_010878268.1">
    <property type="nucleotide sequence ID" value="NC_000917.1"/>
</dbReference>
<dbReference type="SMR" id="O29493"/>
<dbReference type="STRING" id="224325.AF_0765"/>
<dbReference type="PaxDb" id="224325-AF_0765"/>
<dbReference type="EnsemblBacteria" id="AAB90467">
    <property type="protein sequence ID" value="AAB90467"/>
    <property type="gene ID" value="AF_0765"/>
</dbReference>
<dbReference type="KEGG" id="afu:AF_0765"/>
<dbReference type="eggNOG" id="arCOG04314">
    <property type="taxonomic scope" value="Archaea"/>
</dbReference>
<dbReference type="HOGENOM" id="CLU_178987_2_1_2"/>
<dbReference type="OrthoDB" id="7620at2157"/>
<dbReference type="PhylomeDB" id="O29493"/>
<dbReference type="Proteomes" id="UP000002199">
    <property type="component" value="Chromosome"/>
</dbReference>
<dbReference type="GO" id="GO:0022627">
    <property type="term" value="C:cytosolic small ribosomal subunit"/>
    <property type="evidence" value="ECO:0007669"/>
    <property type="project" value="TreeGrafter"/>
</dbReference>
<dbReference type="GO" id="GO:0003735">
    <property type="term" value="F:structural constituent of ribosome"/>
    <property type="evidence" value="ECO:0007669"/>
    <property type="project" value="InterPro"/>
</dbReference>
<dbReference type="GO" id="GO:0030490">
    <property type="term" value="P:maturation of SSU-rRNA"/>
    <property type="evidence" value="ECO:0007669"/>
    <property type="project" value="TreeGrafter"/>
</dbReference>
<dbReference type="GO" id="GO:0000028">
    <property type="term" value="P:ribosomal small subunit assembly"/>
    <property type="evidence" value="ECO:0007669"/>
    <property type="project" value="TreeGrafter"/>
</dbReference>
<dbReference type="GO" id="GO:0006412">
    <property type="term" value="P:translation"/>
    <property type="evidence" value="ECO:0007669"/>
    <property type="project" value="UniProtKB-UniRule"/>
</dbReference>
<dbReference type="CDD" id="cd04457">
    <property type="entry name" value="S1_S28E"/>
    <property type="match status" value="1"/>
</dbReference>
<dbReference type="FunFam" id="2.40.50.140:FF:000145">
    <property type="entry name" value="30S ribosomal protein S28e"/>
    <property type="match status" value="1"/>
</dbReference>
<dbReference type="Gene3D" id="2.40.50.140">
    <property type="entry name" value="Nucleic acid-binding proteins"/>
    <property type="match status" value="1"/>
</dbReference>
<dbReference type="HAMAP" id="MF_00292">
    <property type="entry name" value="Ribosomal_eS28"/>
    <property type="match status" value="1"/>
</dbReference>
<dbReference type="InterPro" id="IPR012340">
    <property type="entry name" value="NA-bd_OB-fold"/>
</dbReference>
<dbReference type="InterPro" id="IPR000289">
    <property type="entry name" value="Ribosomal_eS28"/>
</dbReference>
<dbReference type="InterPro" id="IPR028626">
    <property type="entry name" value="Ribosomal_eS28_CS"/>
</dbReference>
<dbReference type="NCBIfam" id="NF003080">
    <property type="entry name" value="PRK04007.1"/>
    <property type="match status" value="1"/>
</dbReference>
<dbReference type="PANTHER" id="PTHR10769">
    <property type="entry name" value="40S RIBOSOMAL PROTEIN S28"/>
    <property type="match status" value="1"/>
</dbReference>
<dbReference type="PANTHER" id="PTHR10769:SF3">
    <property type="entry name" value="SMALL RIBOSOMAL SUBUNIT PROTEIN ES28"/>
    <property type="match status" value="1"/>
</dbReference>
<dbReference type="Pfam" id="PF01200">
    <property type="entry name" value="Ribosomal_S28e"/>
    <property type="match status" value="1"/>
</dbReference>
<dbReference type="SUPFAM" id="SSF50249">
    <property type="entry name" value="Nucleic acid-binding proteins"/>
    <property type="match status" value="1"/>
</dbReference>
<dbReference type="PROSITE" id="PS00961">
    <property type="entry name" value="RIBOSOMAL_S28E"/>
    <property type="match status" value="1"/>
</dbReference>
<protein>
    <recommendedName>
        <fullName evidence="1">Small ribosomal subunit protein eS28</fullName>
    </recommendedName>
    <alternativeName>
        <fullName>30S ribosomal protein S28e</fullName>
    </alternativeName>
</protein>
<evidence type="ECO:0000305" key="1"/>
<gene>
    <name type="primary">rps28e</name>
    <name type="ordered locus">AF_0765</name>
</gene>
<proteinExistence type="inferred from homology"/>
<reference key="1">
    <citation type="journal article" date="1997" name="Nature">
        <title>The complete genome sequence of the hyperthermophilic, sulphate-reducing archaeon Archaeoglobus fulgidus.</title>
        <authorList>
            <person name="Klenk H.-P."/>
            <person name="Clayton R.A."/>
            <person name="Tomb J.-F."/>
            <person name="White O."/>
            <person name="Nelson K.E."/>
            <person name="Ketchum K.A."/>
            <person name="Dodson R.J."/>
            <person name="Gwinn M.L."/>
            <person name="Hickey E.K."/>
            <person name="Peterson J.D."/>
            <person name="Richardson D.L."/>
            <person name="Kerlavage A.R."/>
            <person name="Graham D.E."/>
            <person name="Kyrpides N.C."/>
            <person name="Fleischmann R.D."/>
            <person name="Quackenbush J."/>
            <person name="Lee N.H."/>
            <person name="Sutton G.G."/>
            <person name="Gill S.R."/>
            <person name="Kirkness E.F."/>
            <person name="Dougherty B.A."/>
            <person name="McKenney K."/>
            <person name="Adams M.D."/>
            <person name="Loftus B.J."/>
            <person name="Peterson S.N."/>
            <person name="Reich C.I."/>
            <person name="McNeil L.K."/>
            <person name="Badger J.H."/>
            <person name="Glodek A."/>
            <person name="Zhou L."/>
            <person name="Overbeek R."/>
            <person name="Gocayne J.D."/>
            <person name="Weidman J.F."/>
            <person name="McDonald L.A."/>
            <person name="Utterback T.R."/>
            <person name="Cotton M.D."/>
            <person name="Spriggs T."/>
            <person name="Artiach P."/>
            <person name="Kaine B.P."/>
            <person name="Sykes S.M."/>
            <person name="Sadow P.W."/>
            <person name="D'Andrea K.P."/>
            <person name="Bowman C."/>
            <person name="Fujii C."/>
            <person name="Garland S.A."/>
            <person name="Mason T.M."/>
            <person name="Olsen G.J."/>
            <person name="Fraser C.M."/>
            <person name="Smith H.O."/>
            <person name="Woese C.R."/>
            <person name="Venter J.C."/>
        </authorList>
    </citation>
    <scope>NUCLEOTIDE SEQUENCE [LARGE SCALE GENOMIC DNA]</scope>
    <source>
        <strain>ATCC 49558 / DSM 4304 / JCM 9628 / NBRC 100126 / VC-16</strain>
    </source>
</reference>
<sequence length="71" mass="7812">MADEEDIQPAEVVELVGRTGMHGEVTQVKVRVLAGENKGRVITRNVFGPVKVGDIIMIKETAREARKLAVR</sequence>
<keyword id="KW-1185">Reference proteome</keyword>
<keyword id="KW-0687">Ribonucleoprotein</keyword>
<keyword id="KW-0689">Ribosomal protein</keyword>
<accession>O29493</accession>
<organism>
    <name type="scientific">Archaeoglobus fulgidus (strain ATCC 49558 / DSM 4304 / JCM 9628 / NBRC 100126 / VC-16)</name>
    <dbReference type="NCBI Taxonomy" id="224325"/>
    <lineage>
        <taxon>Archaea</taxon>
        <taxon>Methanobacteriati</taxon>
        <taxon>Methanobacteriota</taxon>
        <taxon>Archaeoglobi</taxon>
        <taxon>Archaeoglobales</taxon>
        <taxon>Archaeoglobaceae</taxon>
        <taxon>Archaeoglobus</taxon>
    </lineage>
</organism>
<comment type="similarity">
    <text evidence="1">Belongs to the eukaryotic ribosomal protein eS28 family.</text>
</comment>
<feature type="chain" id="PRO_0000136845" description="Small ribosomal subunit protein eS28">
    <location>
        <begin position="1"/>
        <end position="71"/>
    </location>
</feature>
<name>RS28_ARCFU</name>